<keyword id="KW-0687">Ribonucleoprotein</keyword>
<keyword id="KW-0689">Ribosomal protein</keyword>
<keyword id="KW-0694">RNA-binding</keyword>
<keyword id="KW-0699">rRNA-binding</keyword>
<dbReference type="EMBL" id="CP001661">
    <property type="protein sequence ID" value="ACT19334.1"/>
    <property type="molecule type" value="Genomic_DNA"/>
</dbReference>
<dbReference type="SMR" id="C6E4N8"/>
<dbReference type="STRING" id="443144.GM21_3309"/>
<dbReference type="KEGG" id="gem:GM21_3309"/>
<dbReference type="eggNOG" id="COG0200">
    <property type="taxonomic scope" value="Bacteria"/>
</dbReference>
<dbReference type="HOGENOM" id="CLU_055188_4_2_7"/>
<dbReference type="OrthoDB" id="9810293at2"/>
<dbReference type="GO" id="GO:0022625">
    <property type="term" value="C:cytosolic large ribosomal subunit"/>
    <property type="evidence" value="ECO:0007669"/>
    <property type="project" value="TreeGrafter"/>
</dbReference>
<dbReference type="GO" id="GO:0019843">
    <property type="term" value="F:rRNA binding"/>
    <property type="evidence" value="ECO:0007669"/>
    <property type="project" value="UniProtKB-UniRule"/>
</dbReference>
<dbReference type="GO" id="GO:0003735">
    <property type="term" value="F:structural constituent of ribosome"/>
    <property type="evidence" value="ECO:0007669"/>
    <property type="project" value="InterPro"/>
</dbReference>
<dbReference type="GO" id="GO:0006412">
    <property type="term" value="P:translation"/>
    <property type="evidence" value="ECO:0007669"/>
    <property type="project" value="UniProtKB-UniRule"/>
</dbReference>
<dbReference type="Gene3D" id="3.100.10.10">
    <property type="match status" value="1"/>
</dbReference>
<dbReference type="HAMAP" id="MF_01341">
    <property type="entry name" value="Ribosomal_uL15"/>
    <property type="match status" value="1"/>
</dbReference>
<dbReference type="InterPro" id="IPR030878">
    <property type="entry name" value="Ribosomal_uL15"/>
</dbReference>
<dbReference type="InterPro" id="IPR021131">
    <property type="entry name" value="Ribosomal_uL15/eL18"/>
</dbReference>
<dbReference type="InterPro" id="IPR036227">
    <property type="entry name" value="Ribosomal_uL15/eL18_sf"/>
</dbReference>
<dbReference type="InterPro" id="IPR005749">
    <property type="entry name" value="Ribosomal_uL15_bac-type"/>
</dbReference>
<dbReference type="InterPro" id="IPR001196">
    <property type="entry name" value="Ribosomal_uL15_CS"/>
</dbReference>
<dbReference type="NCBIfam" id="TIGR01071">
    <property type="entry name" value="rplO_bact"/>
    <property type="match status" value="1"/>
</dbReference>
<dbReference type="PANTHER" id="PTHR12934">
    <property type="entry name" value="50S RIBOSOMAL PROTEIN L15"/>
    <property type="match status" value="1"/>
</dbReference>
<dbReference type="PANTHER" id="PTHR12934:SF11">
    <property type="entry name" value="LARGE RIBOSOMAL SUBUNIT PROTEIN UL15M"/>
    <property type="match status" value="1"/>
</dbReference>
<dbReference type="Pfam" id="PF00828">
    <property type="entry name" value="Ribosomal_L27A"/>
    <property type="match status" value="1"/>
</dbReference>
<dbReference type="SUPFAM" id="SSF52080">
    <property type="entry name" value="Ribosomal proteins L15p and L18e"/>
    <property type="match status" value="1"/>
</dbReference>
<dbReference type="PROSITE" id="PS00475">
    <property type="entry name" value="RIBOSOMAL_L15"/>
    <property type="match status" value="1"/>
</dbReference>
<reference key="1">
    <citation type="submission" date="2009-07" db="EMBL/GenBank/DDBJ databases">
        <title>Complete sequence of Geobacter sp. M21.</title>
        <authorList>
            <consortium name="US DOE Joint Genome Institute"/>
            <person name="Lucas S."/>
            <person name="Copeland A."/>
            <person name="Lapidus A."/>
            <person name="Glavina del Rio T."/>
            <person name="Dalin E."/>
            <person name="Tice H."/>
            <person name="Bruce D."/>
            <person name="Goodwin L."/>
            <person name="Pitluck S."/>
            <person name="Saunders E."/>
            <person name="Brettin T."/>
            <person name="Detter J.C."/>
            <person name="Han C."/>
            <person name="Larimer F."/>
            <person name="Land M."/>
            <person name="Hauser L."/>
            <person name="Kyrpides N."/>
            <person name="Ovchinnikova G."/>
            <person name="Lovley D."/>
        </authorList>
    </citation>
    <scope>NUCLEOTIDE SEQUENCE [LARGE SCALE GENOMIC DNA]</scope>
    <source>
        <strain>M21</strain>
    </source>
</reference>
<protein>
    <recommendedName>
        <fullName evidence="1">Large ribosomal subunit protein uL15</fullName>
    </recommendedName>
    <alternativeName>
        <fullName evidence="3">50S ribosomal protein L15</fullName>
    </alternativeName>
</protein>
<gene>
    <name evidence="1" type="primary">rplO</name>
    <name type="ordered locus">GM21_3309</name>
</gene>
<accession>C6E4N8</accession>
<feature type="chain" id="PRO_1000214706" description="Large ribosomal subunit protein uL15">
    <location>
        <begin position="1"/>
        <end position="146"/>
    </location>
</feature>
<feature type="region of interest" description="Disordered" evidence="2">
    <location>
        <begin position="1"/>
        <end position="64"/>
    </location>
</feature>
<feature type="compositionally biased region" description="Basic residues" evidence="2">
    <location>
        <begin position="30"/>
        <end position="39"/>
    </location>
</feature>
<organism>
    <name type="scientific">Geobacter sp. (strain M21)</name>
    <dbReference type="NCBI Taxonomy" id="443144"/>
    <lineage>
        <taxon>Bacteria</taxon>
        <taxon>Pseudomonadati</taxon>
        <taxon>Thermodesulfobacteriota</taxon>
        <taxon>Desulfuromonadia</taxon>
        <taxon>Geobacterales</taxon>
        <taxon>Geobacteraceae</taxon>
        <taxon>Geobacter</taxon>
    </lineage>
</organism>
<name>RL15_GEOSM</name>
<evidence type="ECO:0000255" key="1">
    <source>
        <dbReference type="HAMAP-Rule" id="MF_01341"/>
    </source>
</evidence>
<evidence type="ECO:0000256" key="2">
    <source>
        <dbReference type="SAM" id="MobiDB-lite"/>
    </source>
</evidence>
<evidence type="ECO:0000305" key="3"/>
<proteinExistence type="inferred from homology"/>
<comment type="function">
    <text evidence="1">Binds to the 23S rRNA.</text>
</comment>
<comment type="subunit">
    <text evidence="1">Part of the 50S ribosomal subunit.</text>
</comment>
<comment type="similarity">
    <text evidence="1">Belongs to the universal ribosomal protein uL15 family.</text>
</comment>
<sequence>MQLNTIKPAIGSTKNRKRIGRGVGSGHGKTATKGHKGQKARSGGSVKPGFEGGQMPMHRRLPKRGFTPLSKKDYALVNLCQLEVFEAGSVIDAEALLKSGIISGVRDGIKVLATGDITRALTIKAHKFSASAREKITAAGGSIEEI</sequence>